<gene>
    <name type="primary">HAL21</name>
    <name type="synonym">MET222</name>
</gene>
<comment type="function">
    <text evidence="1">Phosphatase that converts adenosine 3'-phosphate 5'-phosphosulfate (PAPS) to adenosine 5'-phosphosulfate (APS) and 3'(2')-phosphoadenosine 5'-phosphate (PAP) to AMP. Regulates the flux of sulfur in the sulfur-activation pathway by converting PAPS to APS. Involved in salt tolerance.</text>
</comment>
<comment type="catalytic activity">
    <reaction evidence="1">
        <text>3'-phosphoadenylyl sulfate + H2O = adenosine 5'-phosphosulfate + phosphate</text>
        <dbReference type="Rhea" id="RHEA:77639"/>
        <dbReference type="ChEBI" id="CHEBI:15377"/>
        <dbReference type="ChEBI" id="CHEBI:43474"/>
        <dbReference type="ChEBI" id="CHEBI:58243"/>
        <dbReference type="ChEBI" id="CHEBI:58339"/>
        <dbReference type="EC" id="3.1.3.7"/>
    </reaction>
    <physiologicalReaction direction="left-to-right" evidence="1">
        <dbReference type="Rhea" id="RHEA:77640"/>
    </physiologicalReaction>
</comment>
<comment type="catalytic activity">
    <reaction evidence="1">
        <text>adenosine 3',5'-bisphosphate + H2O = AMP + phosphate</text>
        <dbReference type="Rhea" id="RHEA:10040"/>
        <dbReference type="ChEBI" id="CHEBI:15377"/>
        <dbReference type="ChEBI" id="CHEBI:43474"/>
        <dbReference type="ChEBI" id="CHEBI:58343"/>
        <dbReference type="ChEBI" id="CHEBI:456215"/>
        <dbReference type="EC" id="3.1.3.7"/>
    </reaction>
    <physiologicalReaction direction="left-to-right" evidence="1">
        <dbReference type="Rhea" id="RHEA:10041"/>
    </physiologicalReaction>
</comment>
<comment type="catalytic activity">
    <reaction evidence="1">
        <text>adenosine 2',5'-bisphosphate + H2O = AMP + phosphate</text>
        <dbReference type="Rhea" id="RHEA:77643"/>
        <dbReference type="ChEBI" id="CHEBI:15377"/>
        <dbReference type="ChEBI" id="CHEBI:43474"/>
        <dbReference type="ChEBI" id="CHEBI:194156"/>
        <dbReference type="ChEBI" id="CHEBI:456215"/>
        <dbReference type="EC" id="3.1.3.7"/>
    </reaction>
    <physiologicalReaction direction="left-to-right" evidence="1">
        <dbReference type="Rhea" id="RHEA:77644"/>
    </physiologicalReaction>
</comment>
<comment type="cofactor">
    <cofactor evidence="1">
        <name>Mg(2+)</name>
        <dbReference type="ChEBI" id="CHEBI:18420"/>
    </cofactor>
    <text evidence="1">Binds 3 Mg(2+) ions per subunit.</text>
</comment>
<comment type="similarity">
    <text evidence="2">Belongs to the inositol monophosphatase superfamily.</text>
</comment>
<organism>
    <name type="scientific">Candida albicans (strain WO-1)</name>
    <name type="common">Yeast</name>
    <dbReference type="NCBI Taxonomy" id="294748"/>
    <lineage>
        <taxon>Eukaryota</taxon>
        <taxon>Fungi</taxon>
        <taxon>Dikarya</taxon>
        <taxon>Ascomycota</taxon>
        <taxon>Saccharomycotina</taxon>
        <taxon>Pichiomycetes</taxon>
        <taxon>Debaryomycetaceae</taxon>
        <taxon>Candida/Lodderomyces clade</taxon>
        <taxon>Candida</taxon>
    </lineage>
</organism>
<name>HAL21_CANAW</name>
<dbReference type="EC" id="3.1.3.7" evidence="1"/>
<dbReference type="EMBL" id="CM000312">
    <property type="status" value="NOT_ANNOTATED_CDS"/>
    <property type="molecule type" value="Genomic_DNA"/>
</dbReference>
<dbReference type="EMBL" id="X76689">
    <property type="status" value="NOT_ANNOTATED_CDS"/>
    <property type="molecule type" value="Genomic_DNA"/>
</dbReference>
<dbReference type="SMR" id="P0CY21"/>
<dbReference type="PaxDb" id="5476-P0CY21"/>
<dbReference type="Proteomes" id="UP000001429">
    <property type="component" value="Chromosome 6"/>
</dbReference>
<dbReference type="GO" id="GO:0008441">
    <property type="term" value="F:3'(2'),5'-bisphosphate nucleotidase activity"/>
    <property type="evidence" value="ECO:0007669"/>
    <property type="project" value="UniProtKB-EC"/>
</dbReference>
<dbReference type="GO" id="GO:0046872">
    <property type="term" value="F:metal ion binding"/>
    <property type="evidence" value="ECO:0007669"/>
    <property type="project" value="UniProtKB-KW"/>
</dbReference>
<dbReference type="GO" id="GO:0000166">
    <property type="term" value="F:nucleotide binding"/>
    <property type="evidence" value="ECO:0007669"/>
    <property type="project" value="UniProtKB-KW"/>
</dbReference>
<dbReference type="GO" id="GO:0008652">
    <property type="term" value="P:amino acid biosynthetic process"/>
    <property type="evidence" value="ECO:0007669"/>
    <property type="project" value="UniProtKB-KW"/>
</dbReference>
<dbReference type="GO" id="GO:0046854">
    <property type="term" value="P:phosphatidylinositol phosphate biosynthetic process"/>
    <property type="evidence" value="ECO:0007669"/>
    <property type="project" value="InterPro"/>
</dbReference>
<dbReference type="GO" id="GO:0000103">
    <property type="term" value="P:sulfate assimilation"/>
    <property type="evidence" value="ECO:0007669"/>
    <property type="project" value="TreeGrafter"/>
</dbReference>
<dbReference type="CDD" id="cd01517">
    <property type="entry name" value="PAP_phosphatase"/>
    <property type="match status" value="1"/>
</dbReference>
<dbReference type="FunFam" id="3.30.540.10:FF:000015">
    <property type="entry name" value="3',5'-bisphosphate nucleotidase"/>
    <property type="match status" value="1"/>
</dbReference>
<dbReference type="FunFam" id="3.40.190.80:FF:000003">
    <property type="entry name" value="PAP-specific phosphatase HAL2-like"/>
    <property type="match status" value="1"/>
</dbReference>
<dbReference type="Gene3D" id="3.40.190.80">
    <property type="match status" value="1"/>
</dbReference>
<dbReference type="Gene3D" id="3.30.540.10">
    <property type="entry name" value="Fructose-1,6-Bisphosphatase, subunit A, domain 1"/>
    <property type="match status" value="1"/>
</dbReference>
<dbReference type="InterPro" id="IPR006239">
    <property type="entry name" value="DPNP"/>
</dbReference>
<dbReference type="InterPro" id="IPR020583">
    <property type="entry name" value="Inositol_monoP_metal-BS"/>
</dbReference>
<dbReference type="InterPro" id="IPR051090">
    <property type="entry name" value="Inositol_monoP_superfamily"/>
</dbReference>
<dbReference type="InterPro" id="IPR000760">
    <property type="entry name" value="Inositol_monophosphatase-like"/>
</dbReference>
<dbReference type="InterPro" id="IPR020550">
    <property type="entry name" value="Inositol_monophosphatase_CS"/>
</dbReference>
<dbReference type="NCBIfam" id="TIGR01330">
    <property type="entry name" value="bisphos_HAL2"/>
    <property type="match status" value="1"/>
</dbReference>
<dbReference type="PANTHER" id="PTHR43200:SF6">
    <property type="entry name" value="3'(2'),5'-BISPHOSPHATE NUCLEOTIDASE"/>
    <property type="match status" value="1"/>
</dbReference>
<dbReference type="PANTHER" id="PTHR43200">
    <property type="entry name" value="PHOSPHATASE"/>
    <property type="match status" value="1"/>
</dbReference>
<dbReference type="Pfam" id="PF00459">
    <property type="entry name" value="Inositol_P"/>
    <property type="match status" value="1"/>
</dbReference>
<dbReference type="SUPFAM" id="SSF56655">
    <property type="entry name" value="Carbohydrate phosphatase"/>
    <property type="match status" value="1"/>
</dbReference>
<dbReference type="PROSITE" id="PS00629">
    <property type="entry name" value="IMP_1"/>
    <property type="match status" value="1"/>
</dbReference>
<dbReference type="PROSITE" id="PS00630">
    <property type="entry name" value="IMP_2"/>
    <property type="match status" value="1"/>
</dbReference>
<accession>P0CY21</accession>
<accession>P46594</accession>
<accession>Q59WV3</accession>
<accession>Q59XQ8</accession>
<protein>
    <recommendedName>
        <fullName>3'(2'),5'-bisphosphate nucleotidase 1</fullName>
        <ecNumber evidence="1">3.1.3.7</ecNumber>
    </recommendedName>
    <alternativeName>
        <fullName>3'(2'),5-bisphosphonucleoside 3'(2')-phosphohydrolase 1</fullName>
    </alternativeName>
    <alternativeName>
        <fullName>DPNPase 1</fullName>
    </alternativeName>
    <alternativeName>
        <fullName>Halotolerance protein HAL21</fullName>
    </alternativeName>
</protein>
<sequence length="364" mass="39359">MSHTTHPYQKELEVATLAVKRASLLTKQLSDSIVQTARSGTLTKDDKSPVTIGDFALQAIINHAIKLNFPSDEIVGEEDSQELQENSSLADQVLSLIIKIQQETSVYNDVVGTLTDKNKVFQSIDYGNSQGGLKGRFWALDPIDGTKGFLRGDQFAVCLALIEDGKVVLGVIGCPNLLENIVSNEEHSGVVGGLYSAVKGVGSFYSELFKEGAEPLSQQKPIKMQNHTNPSQLKVVEGVEKGHSSHSTQAEIKAKLGFDPTTVAKQTVNLDSQVKYCVLASGQADIYLRLPVSDTYREKIWDHAAGNILIYESGGQVGDVTGAPLNFGNGRTLDSKGVIAANKEIFDKVIDAVTEIRKSSTPRV</sequence>
<feature type="chain" id="PRO_0000413037" description="3'(2'),5'-bisphosphate nucleotidase 1">
    <location>
        <begin position="1"/>
        <end position="364"/>
    </location>
</feature>
<feature type="active site" description="Proton acceptor" evidence="1">
    <location>
        <position position="54"/>
    </location>
</feature>
<feature type="active site" description="Proton acceptor" evidence="1">
    <location>
        <position position="146"/>
    </location>
</feature>
<feature type="binding site" evidence="1">
    <location>
        <position position="77"/>
    </location>
    <ligand>
        <name>Mg(2+)</name>
        <dbReference type="ChEBI" id="CHEBI:18420"/>
        <label>1</label>
    </ligand>
</feature>
<feature type="binding site" evidence="1">
    <location>
        <position position="77"/>
    </location>
    <ligand>
        <name>Mg(2+)</name>
        <dbReference type="ChEBI" id="CHEBI:18420"/>
        <label>3</label>
    </ligand>
</feature>
<feature type="binding site" evidence="1">
    <location>
        <position position="141"/>
    </location>
    <ligand>
        <name>Mg(2+)</name>
        <dbReference type="ChEBI" id="CHEBI:18420"/>
        <label>1</label>
    </ligand>
</feature>
<feature type="binding site" evidence="1">
    <location>
        <position position="141"/>
    </location>
    <ligand>
        <name>Mg(2+)</name>
        <dbReference type="ChEBI" id="CHEBI:18420"/>
        <label>2</label>
    </ligand>
</feature>
<feature type="binding site" evidence="1">
    <location>
        <position position="143"/>
    </location>
    <ligand>
        <name>Mg(2+)</name>
        <dbReference type="ChEBI" id="CHEBI:18420"/>
        <label>1</label>
    </ligand>
</feature>
<feature type="binding site" evidence="1">
    <location>
        <position position="144"/>
    </location>
    <ligand>
        <name>Mg(2+)</name>
        <dbReference type="ChEBI" id="CHEBI:18420"/>
        <label>2</label>
    </ligand>
</feature>
<feature type="binding site" evidence="1">
    <location>
        <position position="146"/>
    </location>
    <ligand>
        <name>adenosine 3',5'-bisphosphate</name>
        <dbReference type="ChEBI" id="CHEBI:58343"/>
    </ligand>
</feature>
<feature type="binding site" evidence="1">
    <location>
        <position position="243"/>
    </location>
    <ligand>
        <name>adenosine 3',5'-bisphosphate</name>
        <dbReference type="ChEBI" id="CHEBI:58343"/>
    </ligand>
</feature>
<feature type="binding site" evidence="1">
    <location>
        <position position="243"/>
    </location>
    <ligand>
        <name>AMP</name>
        <dbReference type="ChEBI" id="CHEBI:456215"/>
    </ligand>
</feature>
<feature type="binding site" evidence="1">
    <location>
        <position position="272"/>
    </location>
    <ligand>
        <name>adenosine 3',5'-bisphosphate</name>
        <dbReference type="ChEBI" id="CHEBI:58343"/>
    </ligand>
</feature>
<feature type="binding site" evidence="1">
    <location>
        <position position="272"/>
    </location>
    <ligand>
        <name>AMP</name>
        <dbReference type="ChEBI" id="CHEBI:456215"/>
    </ligand>
</feature>
<feature type="binding site" evidence="1">
    <location>
        <position position="275"/>
    </location>
    <ligand>
        <name>adenosine 3',5'-bisphosphate</name>
        <dbReference type="ChEBI" id="CHEBI:58343"/>
    </ligand>
</feature>
<feature type="binding site" evidence="1">
    <location>
        <position position="275"/>
    </location>
    <ligand>
        <name>AMP</name>
        <dbReference type="ChEBI" id="CHEBI:456215"/>
    </ligand>
</feature>
<feature type="binding site" evidence="1">
    <location>
        <position position="289"/>
    </location>
    <ligand>
        <name>adenosine 3',5'-bisphosphate</name>
        <dbReference type="ChEBI" id="CHEBI:58343"/>
    </ligand>
</feature>
<feature type="binding site" evidence="1">
    <location>
        <position position="289"/>
    </location>
    <ligand>
        <name>AMP</name>
        <dbReference type="ChEBI" id="CHEBI:456215"/>
    </ligand>
</feature>
<feature type="binding site" evidence="1">
    <location>
        <position position="302"/>
    </location>
    <ligand>
        <name>adenosine 3',5'-bisphosphate</name>
        <dbReference type="ChEBI" id="CHEBI:58343"/>
    </ligand>
</feature>
<feature type="binding site" evidence="1">
    <location>
        <position position="302"/>
    </location>
    <ligand>
        <name>AMP</name>
        <dbReference type="ChEBI" id="CHEBI:456215"/>
    </ligand>
</feature>
<feature type="binding site" evidence="1">
    <location>
        <position position="302"/>
    </location>
    <ligand>
        <name>Mg(2+)</name>
        <dbReference type="ChEBI" id="CHEBI:18420"/>
        <label>2</label>
    </ligand>
</feature>
<feature type="sequence conflict" description="In Ref. 2; X76689." evidence="2" ref="2">
    <original>D</original>
    <variation>N</variation>
    <location>
        <position position="334"/>
    </location>
</feature>
<reference key="1">
    <citation type="journal article" date="2009" name="Nature">
        <title>Evolution of pathogenicity and sexual reproduction in eight Candida genomes.</title>
        <authorList>
            <person name="Butler G."/>
            <person name="Rasmussen M.D."/>
            <person name="Lin M.F."/>
            <person name="Santos M.A.S."/>
            <person name="Sakthikumar S."/>
            <person name="Munro C.A."/>
            <person name="Rheinbay E."/>
            <person name="Grabherr M."/>
            <person name="Forche A."/>
            <person name="Reedy J.L."/>
            <person name="Agrafioti I."/>
            <person name="Arnaud M.B."/>
            <person name="Bates S."/>
            <person name="Brown A.J.P."/>
            <person name="Brunke S."/>
            <person name="Costanzo M.C."/>
            <person name="Fitzpatrick D.A."/>
            <person name="de Groot P.W.J."/>
            <person name="Harris D."/>
            <person name="Hoyer L.L."/>
            <person name="Hube B."/>
            <person name="Klis F.M."/>
            <person name="Kodira C."/>
            <person name="Lennard N."/>
            <person name="Logue M.E."/>
            <person name="Martin R."/>
            <person name="Neiman A.M."/>
            <person name="Nikolaou E."/>
            <person name="Quail M.A."/>
            <person name="Quinn J."/>
            <person name="Santos M.C."/>
            <person name="Schmitzberger F.F."/>
            <person name="Sherlock G."/>
            <person name="Shah P."/>
            <person name="Silverstein K.A.T."/>
            <person name="Skrzypek M.S."/>
            <person name="Soll D."/>
            <person name="Staggs R."/>
            <person name="Stansfield I."/>
            <person name="Stumpf M.P.H."/>
            <person name="Sudbery P.E."/>
            <person name="Srikantha T."/>
            <person name="Zeng Q."/>
            <person name="Berman J."/>
            <person name="Berriman M."/>
            <person name="Heitman J."/>
            <person name="Gow N.A.R."/>
            <person name="Lorenz M.C."/>
            <person name="Birren B.W."/>
            <person name="Kellis M."/>
            <person name="Cuomo C.A."/>
        </authorList>
    </citation>
    <scope>NUCLEOTIDE SEQUENCE [LARGE SCALE GENOMIC DNA]</scope>
    <source>
        <strain>WO-1</strain>
    </source>
</reference>
<reference key="2">
    <citation type="journal article" date="1994" name="Yeast">
        <title>CAN1, a gene encoding a permease for basic amino acids in Candida albicans.</title>
        <authorList>
            <person name="Sychorova H."/>
            <person name="Souciet J.-L."/>
        </authorList>
    </citation>
    <scope>NUCLEOTIDE SEQUENCE [GENOMIC DNA] OF 260-364</scope>
    <source>
        <strain>WO-1</strain>
    </source>
</reference>
<keyword id="KW-0028">Amino-acid biosynthesis</keyword>
<keyword id="KW-0378">Hydrolase</keyword>
<keyword id="KW-0460">Magnesium</keyword>
<keyword id="KW-0479">Metal-binding</keyword>
<keyword id="KW-0547">Nucleotide-binding</keyword>
<evidence type="ECO:0000250" key="1">
    <source>
        <dbReference type="UniProtKB" id="P32179"/>
    </source>
</evidence>
<evidence type="ECO:0000305" key="2"/>
<proteinExistence type="inferred from homology"/>